<evidence type="ECO:0000255" key="1">
    <source>
        <dbReference type="HAMAP-Rule" id="MF_00115"/>
    </source>
</evidence>
<proteinExistence type="inferred from homology"/>
<reference key="1">
    <citation type="submission" date="2005-03" db="EMBL/GenBank/DDBJ databases">
        <title>Brevibacillus brevis strain 47, complete genome.</title>
        <authorList>
            <person name="Hosoyama A."/>
            <person name="Yamada R."/>
            <person name="Hongo Y."/>
            <person name="Terui Y."/>
            <person name="Ankai A."/>
            <person name="Masuyama W."/>
            <person name="Sekiguchi M."/>
            <person name="Takeda T."/>
            <person name="Asano K."/>
            <person name="Ohji S."/>
            <person name="Ichikawa N."/>
            <person name="Narita S."/>
            <person name="Aoki N."/>
            <person name="Miura H."/>
            <person name="Matsushita S."/>
            <person name="Sekigawa T."/>
            <person name="Yamagata H."/>
            <person name="Yoshikawa H."/>
            <person name="Udaka S."/>
            <person name="Tanikawa S."/>
            <person name="Fujita N."/>
        </authorList>
    </citation>
    <scope>NUCLEOTIDE SEQUENCE [LARGE SCALE GENOMIC DNA]</scope>
    <source>
        <strain>47 / JCM 6285 / NBRC 100599</strain>
    </source>
</reference>
<comment type="function">
    <text evidence="1">Channel that opens in response to stretch forces in the membrane lipid bilayer. May participate in the regulation of osmotic pressure changes within the cell.</text>
</comment>
<comment type="subunit">
    <text evidence="1">Homopentamer.</text>
</comment>
<comment type="subcellular location">
    <subcellularLocation>
        <location evidence="1">Cell membrane</location>
        <topology evidence="1">Multi-pass membrane protein</topology>
    </subcellularLocation>
</comment>
<comment type="similarity">
    <text evidence="1">Belongs to the MscL family.</text>
</comment>
<protein>
    <recommendedName>
        <fullName evidence="1">Large-conductance mechanosensitive channel</fullName>
    </recommendedName>
</protein>
<sequence length="154" mass="16668">MLKEFKEFALKGNVMDLAVGVVIGGAFGKIVTSLVNDIITPLIGLLLGKVDFSGLFINLSGVPYKTIAEAKTAHAATLNYGLFLNSVIDFVIIAFSIFIVIKQLNRFKRKQEVEQAPVTTKECPHCISAIPVKATRCPNCTSMLETKGTALAHE</sequence>
<name>MSCL_BREBN</name>
<dbReference type="EMBL" id="AP008955">
    <property type="protein sequence ID" value="BAH42491.1"/>
    <property type="molecule type" value="Genomic_DNA"/>
</dbReference>
<dbReference type="RefSeq" id="WP_012685240.1">
    <property type="nucleotide sequence ID" value="NC_012491.1"/>
</dbReference>
<dbReference type="SMR" id="C0Z921"/>
<dbReference type="STRING" id="358681.BBR47_15140"/>
<dbReference type="KEGG" id="bbe:BBR47_15140"/>
<dbReference type="eggNOG" id="COG1970">
    <property type="taxonomic scope" value="Bacteria"/>
</dbReference>
<dbReference type="HOGENOM" id="CLU_095787_2_3_9"/>
<dbReference type="Proteomes" id="UP000001877">
    <property type="component" value="Chromosome"/>
</dbReference>
<dbReference type="GO" id="GO:0005886">
    <property type="term" value="C:plasma membrane"/>
    <property type="evidence" value="ECO:0007669"/>
    <property type="project" value="UniProtKB-SubCell"/>
</dbReference>
<dbReference type="GO" id="GO:0008381">
    <property type="term" value="F:mechanosensitive monoatomic ion channel activity"/>
    <property type="evidence" value="ECO:0007669"/>
    <property type="project" value="UniProtKB-UniRule"/>
</dbReference>
<dbReference type="Gene3D" id="1.10.1200.120">
    <property type="entry name" value="Large-conductance mechanosensitive channel, MscL, domain 1"/>
    <property type="match status" value="1"/>
</dbReference>
<dbReference type="HAMAP" id="MF_00115">
    <property type="entry name" value="MscL"/>
    <property type="match status" value="1"/>
</dbReference>
<dbReference type="InterPro" id="IPR019823">
    <property type="entry name" value="Mechanosensitive_channel_CS"/>
</dbReference>
<dbReference type="InterPro" id="IPR001185">
    <property type="entry name" value="MS_channel"/>
</dbReference>
<dbReference type="InterPro" id="IPR037673">
    <property type="entry name" value="MSC/AndL"/>
</dbReference>
<dbReference type="InterPro" id="IPR036019">
    <property type="entry name" value="MscL_channel"/>
</dbReference>
<dbReference type="NCBIfam" id="TIGR00220">
    <property type="entry name" value="mscL"/>
    <property type="match status" value="1"/>
</dbReference>
<dbReference type="NCBIfam" id="NF001843">
    <property type="entry name" value="PRK00567.1-4"/>
    <property type="match status" value="1"/>
</dbReference>
<dbReference type="NCBIfam" id="NF010557">
    <property type="entry name" value="PRK13952.1"/>
    <property type="match status" value="1"/>
</dbReference>
<dbReference type="PANTHER" id="PTHR30266:SF2">
    <property type="entry name" value="LARGE-CONDUCTANCE MECHANOSENSITIVE CHANNEL"/>
    <property type="match status" value="1"/>
</dbReference>
<dbReference type="PANTHER" id="PTHR30266">
    <property type="entry name" value="MECHANOSENSITIVE CHANNEL MSCL"/>
    <property type="match status" value="1"/>
</dbReference>
<dbReference type="Pfam" id="PF01741">
    <property type="entry name" value="MscL"/>
    <property type="match status" value="1"/>
</dbReference>
<dbReference type="PRINTS" id="PR01264">
    <property type="entry name" value="MECHCHANNEL"/>
</dbReference>
<dbReference type="SUPFAM" id="SSF81330">
    <property type="entry name" value="Gated mechanosensitive channel"/>
    <property type="match status" value="1"/>
</dbReference>
<dbReference type="PROSITE" id="PS01327">
    <property type="entry name" value="MSCL"/>
    <property type="match status" value="1"/>
</dbReference>
<accession>C0Z921</accession>
<organism>
    <name type="scientific">Brevibacillus brevis (strain 47 / JCM 6285 / NBRC 100599)</name>
    <dbReference type="NCBI Taxonomy" id="358681"/>
    <lineage>
        <taxon>Bacteria</taxon>
        <taxon>Bacillati</taxon>
        <taxon>Bacillota</taxon>
        <taxon>Bacilli</taxon>
        <taxon>Bacillales</taxon>
        <taxon>Paenibacillaceae</taxon>
        <taxon>Brevibacillus</taxon>
    </lineage>
</organism>
<keyword id="KW-1003">Cell membrane</keyword>
<keyword id="KW-0407">Ion channel</keyword>
<keyword id="KW-0406">Ion transport</keyword>
<keyword id="KW-0472">Membrane</keyword>
<keyword id="KW-1185">Reference proteome</keyword>
<keyword id="KW-0812">Transmembrane</keyword>
<keyword id="KW-1133">Transmembrane helix</keyword>
<keyword id="KW-0813">Transport</keyword>
<gene>
    <name evidence="1" type="primary">mscL</name>
    <name type="ordered locus">BBR47_15140</name>
</gene>
<feature type="chain" id="PRO_1000191356" description="Large-conductance mechanosensitive channel">
    <location>
        <begin position="1"/>
        <end position="154"/>
    </location>
</feature>
<feature type="transmembrane region" description="Helical" evidence="1">
    <location>
        <begin position="14"/>
        <end position="34"/>
    </location>
</feature>
<feature type="transmembrane region" description="Helical" evidence="1">
    <location>
        <begin position="38"/>
        <end position="58"/>
    </location>
</feature>
<feature type="transmembrane region" description="Helical" evidence="1">
    <location>
        <begin position="81"/>
        <end position="101"/>
    </location>
</feature>